<dbReference type="EC" id="2.7.7.23" evidence="1"/>
<dbReference type="EC" id="2.3.1.157" evidence="1"/>
<dbReference type="EMBL" id="CP000103">
    <property type="protein sequence ID" value="ABB73620.1"/>
    <property type="status" value="ALT_INIT"/>
    <property type="molecule type" value="Genomic_DNA"/>
</dbReference>
<dbReference type="RefSeq" id="WP_202944845.1">
    <property type="nucleotide sequence ID" value="NC_007614.1"/>
</dbReference>
<dbReference type="SMR" id="Q2YCA1"/>
<dbReference type="STRING" id="323848.Nmul_A0312"/>
<dbReference type="KEGG" id="nmu:Nmul_A0312"/>
<dbReference type="eggNOG" id="COG1207">
    <property type="taxonomic scope" value="Bacteria"/>
</dbReference>
<dbReference type="HOGENOM" id="CLU_029499_15_2_4"/>
<dbReference type="UniPathway" id="UPA00113">
    <property type="reaction ID" value="UER00532"/>
</dbReference>
<dbReference type="UniPathway" id="UPA00113">
    <property type="reaction ID" value="UER00533"/>
</dbReference>
<dbReference type="UniPathway" id="UPA00973"/>
<dbReference type="Proteomes" id="UP000002718">
    <property type="component" value="Chromosome"/>
</dbReference>
<dbReference type="GO" id="GO:0005737">
    <property type="term" value="C:cytoplasm"/>
    <property type="evidence" value="ECO:0007669"/>
    <property type="project" value="UniProtKB-SubCell"/>
</dbReference>
<dbReference type="GO" id="GO:0016020">
    <property type="term" value="C:membrane"/>
    <property type="evidence" value="ECO:0007669"/>
    <property type="project" value="GOC"/>
</dbReference>
<dbReference type="GO" id="GO:0019134">
    <property type="term" value="F:glucosamine-1-phosphate N-acetyltransferase activity"/>
    <property type="evidence" value="ECO:0007669"/>
    <property type="project" value="UniProtKB-UniRule"/>
</dbReference>
<dbReference type="GO" id="GO:0000287">
    <property type="term" value="F:magnesium ion binding"/>
    <property type="evidence" value="ECO:0007669"/>
    <property type="project" value="UniProtKB-UniRule"/>
</dbReference>
<dbReference type="GO" id="GO:0003977">
    <property type="term" value="F:UDP-N-acetylglucosamine diphosphorylase activity"/>
    <property type="evidence" value="ECO:0007669"/>
    <property type="project" value="UniProtKB-UniRule"/>
</dbReference>
<dbReference type="GO" id="GO:0000902">
    <property type="term" value="P:cell morphogenesis"/>
    <property type="evidence" value="ECO:0007669"/>
    <property type="project" value="UniProtKB-UniRule"/>
</dbReference>
<dbReference type="GO" id="GO:0071555">
    <property type="term" value="P:cell wall organization"/>
    <property type="evidence" value="ECO:0007669"/>
    <property type="project" value="UniProtKB-KW"/>
</dbReference>
<dbReference type="GO" id="GO:0009245">
    <property type="term" value="P:lipid A biosynthetic process"/>
    <property type="evidence" value="ECO:0007669"/>
    <property type="project" value="UniProtKB-UniRule"/>
</dbReference>
<dbReference type="GO" id="GO:0009252">
    <property type="term" value="P:peptidoglycan biosynthetic process"/>
    <property type="evidence" value="ECO:0007669"/>
    <property type="project" value="UniProtKB-UniRule"/>
</dbReference>
<dbReference type="GO" id="GO:0008360">
    <property type="term" value="P:regulation of cell shape"/>
    <property type="evidence" value="ECO:0007669"/>
    <property type="project" value="UniProtKB-KW"/>
</dbReference>
<dbReference type="GO" id="GO:0006048">
    <property type="term" value="P:UDP-N-acetylglucosamine biosynthetic process"/>
    <property type="evidence" value="ECO:0007669"/>
    <property type="project" value="UniProtKB-UniPathway"/>
</dbReference>
<dbReference type="CDD" id="cd02540">
    <property type="entry name" value="GT2_GlmU_N_bac"/>
    <property type="match status" value="1"/>
</dbReference>
<dbReference type="CDD" id="cd03353">
    <property type="entry name" value="LbH_GlmU_C"/>
    <property type="match status" value="1"/>
</dbReference>
<dbReference type="Gene3D" id="2.160.10.10">
    <property type="entry name" value="Hexapeptide repeat proteins"/>
    <property type="match status" value="1"/>
</dbReference>
<dbReference type="Gene3D" id="3.90.550.10">
    <property type="entry name" value="Spore Coat Polysaccharide Biosynthesis Protein SpsA, Chain A"/>
    <property type="match status" value="1"/>
</dbReference>
<dbReference type="HAMAP" id="MF_01631">
    <property type="entry name" value="GlmU"/>
    <property type="match status" value="1"/>
</dbReference>
<dbReference type="InterPro" id="IPR005882">
    <property type="entry name" value="Bifunctional_GlmU"/>
</dbReference>
<dbReference type="InterPro" id="IPR050065">
    <property type="entry name" value="GlmU-like"/>
</dbReference>
<dbReference type="InterPro" id="IPR038009">
    <property type="entry name" value="GlmU_C_LbH"/>
</dbReference>
<dbReference type="InterPro" id="IPR001451">
    <property type="entry name" value="Hexapep"/>
</dbReference>
<dbReference type="InterPro" id="IPR025877">
    <property type="entry name" value="MobA-like_NTP_Trfase"/>
</dbReference>
<dbReference type="InterPro" id="IPR029044">
    <property type="entry name" value="Nucleotide-diphossugar_trans"/>
</dbReference>
<dbReference type="InterPro" id="IPR011004">
    <property type="entry name" value="Trimer_LpxA-like_sf"/>
</dbReference>
<dbReference type="NCBIfam" id="TIGR01173">
    <property type="entry name" value="glmU"/>
    <property type="match status" value="1"/>
</dbReference>
<dbReference type="PANTHER" id="PTHR43584:SF3">
    <property type="entry name" value="BIFUNCTIONAL PROTEIN GLMU"/>
    <property type="match status" value="1"/>
</dbReference>
<dbReference type="PANTHER" id="PTHR43584">
    <property type="entry name" value="NUCLEOTIDYL TRANSFERASE"/>
    <property type="match status" value="1"/>
</dbReference>
<dbReference type="Pfam" id="PF00132">
    <property type="entry name" value="Hexapep"/>
    <property type="match status" value="2"/>
</dbReference>
<dbReference type="Pfam" id="PF12804">
    <property type="entry name" value="NTP_transf_3"/>
    <property type="match status" value="1"/>
</dbReference>
<dbReference type="SUPFAM" id="SSF53448">
    <property type="entry name" value="Nucleotide-diphospho-sugar transferases"/>
    <property type="match status" value="1"/>
</dbReference>
<dbReference type="SUPFAM" id="SSF51161">
    <property type="entry name" value="Trimeric LpxA-like enzymes"/>
    <property type="match status" value="1"/>
</dbReference>
<name>GLMU_NITMU</name>
<proteinExistence type="inferred from homology"/>
<organism>
    <name type="scientific">Nitrosospira multiformis (strain ATCC 25196 / NCIMB 11849 / C 71)</name>
    <dbReference type="NCBI Taxonomy" id="323848"/>
    <lineage>
        <taxon>Bacteria</taxon>
        <taxon>Pseudomonadati</taxon>
        <taxon>Pseudomonadota</taxon>
        <taxon>Betaproteobacteria</taxon>
        <taxon>Nitrosomonadales</taxon>
        <taxon>Nitrosomonadaceae</taxon>
        <taxon>Nitrosospira</taxon>
    </lineage>
</organism>
<sequence>MSKLNIVVLAAGLGKRMYSALPKVLHPLAGKPLLVHVLDTARALAPHTTCVIYGHGGETVPQTIADESLIWVPQIPQLGTGHAVMQALPHIEKEGITLILYGDVPLTSVETLKKLIAMAGKQTLGLLTVELPDPAGYGRIVRHSETGEVAAIVEEKDASESQRSIGEINTGIMAVPNRYLHGWLCKLENNNAQGEYYLTDIVAMAVKDGVKVATANPAYVWETTGVNSKVQLAGLERIYQTAQANKLLEQGVALADPARIDIRGKLSCGRDVMIDINCIFEGDVQLDDGVKVGAHTILKDVRVAADSVIAPFSLIEAAEIGRNCRIGPYARIRPGTRLEDEVHIGNFVEVKNSALAAGSKANHLSYIGDAVVGRSVNIGAGTITCNYDGANKYQTIIEDDVFVGSDTQLIAPVRVARGSTIGAGSTITRDTPPDMLTLSRAKQLSIDGWKRPVKKPKPKN</sequence>
<keyword id="KW-0012">Acyltransferase</keyword>
<keyword id="KW-0133">Cell shape</keyword>
<keyword id="KW-0961">Cell wall biogenesis/degradation</keyword>
<keyword id="KW-0963">Cytoplasm</keyword>
<keyword id="KW-0460">Magnesium</keyword>
<keyword id="KW-0479">Metal-binding</keyword>
<keyword id="KW-0511">Multifunctional enzyme</keyword>
<keyword id="KW-0548">Nucleotidyltransferase</keyword>
<keyword id="KW-0573">Peptidoglycan synthesis</keyword>
<keyword id="KW-1185">Reference proteome</keyword>
<keyword id="KW-0677">Repeat</keyword>
<keyword id="KW-0808">Transferase</keyword>
<feature type="chain" id="PRO_0000244299" description="Bifunctional protein GlmU">
    <location>
        <begin position="1"/>
        <end position="460"/>
    </location>
</feature>
<feature type="region of interest" description="Pyrophosphorylase" evidence="1">
    <location>
        <begin position="1"/>
        <end position="229"/>
    </location>
</feature>
<feature type="region of interest" description="Linker" evidence="1">
    <location>
        <begin position="230"/>
        <end position="250"/>
    </location>
</feature>
<feature type="region of interest" description="N-acetyltransferase" evidence="1">
    <location>
        <begin position="251"/>
        <end position="460"/>
    </location>
</feature>
<feature type="active site" description="Proton acceptor" evidence="1">
    <location>
        <position position="363"/>
    </location>
</feature>
<feature type="binding site" evidence="1">
    <location>
        <begin position="9"/>
        <end position="12"/>
    </location>
    <ligand>
        <name>UDP-N-acetyl-alpha-D-glucosamine</name>
        <dbReference type="ChEBI" id="CHEBI:57705"/>
    </ligand>
</feature>
<feature type="binding site" evidence="1">
    <location>
        <position position="23"/>
    </location>
    <ligand>
        <name>UDP-N-acetyl-alpha-D-glucosamine</name>
        <dbReference type="ChEBI" id="CHEBI:57705"/>
    </ligand>
</feature>
<feature type="binding site" evidence="1">
    <location>
        <position position="74"/>
    </location>
    <ligand>
        <name>UDP-N-acetyl-alpha-D-glucosamine</name>
        <dbReference type="ChEBI" id="CHEBI:57705"/>
    </ligand>
</feature>
<feature type="binding site" evidence="1">
    <location>
        <begin position="79"/>
        <end position="80"/>
    </location>
    <ligand>
        <name>UDP-N-acetyl-alpha-D-glucosamine</name>
        <dbReference type="ChEBI" id="CHEBI:57705"/>
    </ligand>
</feature>
<feature type="binding site" evidence="1">
    <location>
        <begin position="101"/>
        <end position="103"/>
    </location>
    <ligand>
        <name>UDP-N-acetyl-alpha-D-glucosamine</name>
        <dbReference type="ChEBI" id="CHEBI:57705"/>
    </ligand>
</feature>
<feature type="binding site" evidence="1">
    <location>
        <position position="103"/>
    </location>
    <ligand>
        <name>Mg(2+)</name>
        <dbReference type="ChEBI" id="CHEBI:18420"/>
    </ligand>
</feature>
<feature type="binding site" evidence="1">
    <location>
        <position position="138"/>
    </location>
    <ligand>
        <name>UDP-N-acetyl-alpha-D-glucosamine</name>
        <dbReference type="ChEBI" id="CHEBI:57705"/>
    </ligand>
</feature>
<feature type="binding site" evidence="1">
    <location>
        <position position="154"/>
    </location>
    <ligand>
        <name>UDP-N-acetyl-alpha-D-glucosamine</name>
        <dbReference type="ChEBI" id="CHEBI:57705"/>
    </ligand>
</feature>
<feature type="binding site" evidence="1">
    <location>
        <position position="169"/>
    </location>
    <ligand>
        <name>UDP-N-acetyl-alpha-D-glucosamine</name>
        <dbReference type="ChEBI" id="CHEBI:57705"/>
    </ligand>
</feature>
<feature type="binding site" evidence="1">
    <location>
        <position position="227"/>
    </location>
    <ligand>
        <name>Mg(2+)</name>
        <dbReference type="ChEBI" id="CHEBI:18420"/>
    </ligand>
</feature>
<feature type="binding site" evidence="1">
    <location>
        <position position="227"/>
    </location>
    <ligand>
        <name>UDP-N-acetyl-alpha-D-glucosamine</name>
        <dbReference type="ChEBI" id="CHEBI:57705"/>
    </ligand>
</feature>
<feature type="binding site" evidence="1">
    <location>
        <position position="333"/>
    </location>
    <ligand>
        <name>UDP-N-acetyl-alpha-D-glucosamine</name>
        <dbReference type="ChEBI" id="CHEBI:57705"/>
    </ligand>
</feature>
<feature type="binding site" evidence="1">
    <location>
        <position position="351"/>
    </location>
    <ligand>
        <name>UDP-N-acetyl-alpha-D-glucosamine</name>
        <dbReference type="ChEBI" id="CHEBI:57705"/>
    </ligand>
</feature>
<feature type="binding site" evidence="1">
    <location>
        <position position="366"/>
    </location>
    <ligand>
        <name>UDP-N-acetyl-alpha-D-glucosamine</name>
        <dbReference type="ChEBI" id="CHEBI:57705"/>
    </ligand>
</feature>
<feature type="binding site" evidence="1">
    <location>
        <position position="377"/>
    </location>
    <ligand>
        <name>UDP-N-acetyl-alpha-D-glucosamine</name>
        <dbReference type="ChEBI" id="CHEBI:57705"/>
    </ligand>
</feature>
<feature type="binding site" evidence="1">
    <location>
        <position position="380"/>
    </location>
    <ligand>
        <name>acetyl-CoA</name>
        <dbReference type="ChEBI" id="CHEBI:57288"/>
    </ligand>
</feature>
<feature type="binding site" evidence="1">
    <location>
        <begin position="386"/>
        <end position="387"/>
    </location>
    <ligand>
        <name>acetyl-CoA</name>
        <dbReference type="ChEBI" id="CHEBI:57288"/>
    </ligand>
</feature>
<feature type="binding site" evidence="1">
    <location>
        <position position="405"/>
    </location>
    <ligand>
        <name>acetyl-CoA</name>
        <dbReference type="ChEBI" id="CHEBI:57288"/>
    </ligand>
</feature>
<feature type="binding site" evidence="1">
    <location>
        <position position="423"/>
    </location>
    <ligand>
        <name>acetyl-CoA</name>
        <dbReference type="ChEBI" id="CHEBI:57288"/>
    </ligand>
</feature>
<feature type="binding site" evidence="1">
    <location>
        <position position="440"/>
    </location>
    <ligand>
        <name>acetyl-CoA</name>
        <dbReference type="ChEBI" id="CHEBI:57288"/>
    </ligand>
</feature>
<reference key="1">
    <citation type="submission" date="2005-08" db="EMBL/GenBank/DDBJ databases">
        <title>Complete sequence of chromosome 1 of Nitrosospira multiformis ATCC 25196.</title>
        <authorList>
            <person name="Copeland A."/>
            <person name="Lucas S."/>
            <person name="Lapidus A."/>
            <person name="Barry K."/>
            <person name="Detter J.C."/>
            <person name="Glavina T."/>
            <person name="Hammon N."/>
            <person name="Israni S."/>
            <person name="Pitluck S."/>
            <person name="Chain P."/>
            <person name="Malfatti S."/>
            <person name="Shin M."/>
            <person name="Vergez L."/>
            <person name="Schmutz J."/>
            <person name="Larimer F."/>
            <person name="Land M."/>
            <person name="Hauser L."/>
            <person name="Kyrpides N."/>
            <person name="Lykidis A."/>
            <person name="Richardson P."/>
        </authorList>
    </citation>
    <scope>NUCLEOTIDE SEQUENCE [LARGE SCALE GENOMIC DNA]</scope>
    <source>
        <strain>ATCC 25196 / NCIMB 11849 / C 71</strain>
    </source>
</reference>
<comment type="function">
    <text evidence="1">Catalyzes the last two sequential reactions in the de novo biosynthetic pathway for UDP-N-acetylglucosamine (UDP-GlcNAc). The C-terminal domain catalyzes the transfer of acetyl group from acetyl coenzyme A to glucosamine-1-phosphate (GlcN-1-P) to produce N-acetylglucosamine-1-phosphate (GlcNAc-1-P), which is converted into UDP-GlcNAc by the transfer of uridine 5-monophosphate (from uridine 5-triphosphate), a reaction catalyzed by the N-terminal domain.</text>
</comment>
<comment type="catalytic activity">
    <reaction evidence="1">
        <text>alpha-D-glucosamine 1-phosphate + acetyl-CoA = N-acetyl-alpha-D-glucosamine 1-phosphate + CoA + H(+)</text>
        <dbReference type="Rhea" id="RHEA:13725"/>
        <dbReference type="ChEBI" id="CHEBI:15378"/>
        <dbReference type="ChEBI" id="CHEBI:57287"/>
        <dbReference type="ChEBI" id="CHEBI:57288"/>
        <dbReference type="ChEBI" id="CHEBI:57776"/>
        <dbReference type="ChEBI" id="CHEBI:58516"/>
        <dbReference type="EC" id="2.3.1.157"/>
    </reaction>
</comment>
<comment type="catalytic activity">
    <reaction evidence="1">
        <text>N-acetyl-alpha-D-glucosamine 1-phosphate + UTP + H(+) = UDP-N-acetyl-alpha-D-glucosamine + diphosphate</text>
        <dbReference type="Rhea" id="RHEA:13509"/>
        <dbReference type="ChEBI" id="CHEBI:15378"/>
        <dbReference type="ChEBI" id="CHEBI:33019"/>
        <dbReference type="ChEBI" id="CHEBI:46398"/>
        <dbReference type="ChEBI" id="CHEBI:57705"/>
        <dbReference type="ChEBI" id="CHEBI:57776"/>
        <dbReference type="EC" id="2.7.7.23"/>
    </reaction>
</comment>
<comment type="cofactor">
    <cofactor evidence="1">
        <name>Mg(2+)</name>
        <dbReference type="ChEBI" id="CHEBI:18420"/>
    </cofactor>
    <text evidence="1">Binds 1 Mg(2+) ion per subunit.</text>
</comment>
<comment type="pathway">
    <text evidence="1">Nucleotide-sugar biosynthesis; UDP-N-acetyl-alpha-D-glucosamine biosynthesis; N-acetyl-alpha-D-glucosamine 1-phosphate from alpha-D-glucosamine 6-phosphate (route II): step 2/2.</text>
</comment>
<comment type="pathway">
    <text evidence="1">Nucleotide-sugar biosynthesis; UDP-N-acetyl-alpha-D-glucosamine biosynthesis; UDP-N-acetyl-alpha-D-glucosamine from N-acetyl-alpha-D-glucosamine 1-phosphate: step 1/1.</text>
</comment>
<comment type="pathway">
    <text evidence="1">Bacterial outer membrane biogenesis; LPS lipid A biosynthesis.</text>
</comment>
<comment type="subunit">
    <text evidence="1">Homotrimer.</text>
</comment>
<comment type="subcellular location">
    <subcellularLocation>
        <location evidence="1">Cytoplasm</location>
    </subcellularLocation>
</comment>
<comment type="similarity">
    <text evidence="1">In the N-terminal section; belongs to the N-acetylglucosamine-1-phosphate uridyltransferase family.</text>
</comment>
<comment type="similarity">
    <text evidence="1">In the C-terminal section; belongs to the transferase hexapeptide repeat family.</text>
</comment>
<comment type="sequence caution" evidence="2">
    <conflict type="erroneous initiation">
        <sequence resource="EMBL-CDS" id="ABB73620"/>
    </conflict>
</comment>
<protein>
    <recommendedName>
        <fullName evidence="1">Bifunctional protein GlmU</fullName>
    </recommendedName>
    <domain>
        <recommendedName>
            <fullName evidence="1">UDP-N-acetylglucosamine pyrophosphorylase</fullName>
            <ecNumber evidence="1">2.7.7.23</ecNumber>
        </recommendedName>
        <alternativeName>
            <fullName evidence="1">N-acetylglucosamine-1-phosphate uridyltransferase</fullName>
        </alternativeName>
    </domain>
    <domain>
        <recommendedName>
            <fullName evidence="1">Glucosamine-1-phosphate N-acetyltransferase</fullName>
            <ecNumber evidence="1">2.3.1.157</ecNumber>
        </recommendedName>
    </domain>
</protein>
<gene>
    <name evidence="1" type="primary">glmU</name>
    <name type="ordered locus">Nmul_A0312</name>
</gene>
<evidence type="ECO:0000255" key="1">
    <source>
        <dbReference type="HAMAP-Rule" id="MF_01631"/>
    </source>
</evidence>
<evidence type="ECO:0000305" key="2"/>
<accession>Q2YCA1</accession>